<accession>C1C5H2</accession>
<proteinExistence type="inferred from homology"/>
<evidence type="ECO:0000255" key="1">
    <source>
        <dbReference type="HAMAP-Rule" id="MF_00120"/>
    </source>
</evidence>
<sequence length="488" mass="52090">MTFNNKTIEELHNLLVSKEISATELTQATLENIKSREEALNSFVTIAEEQALVQAKAIDEAGIDANNVLSGIPLAVKDNISTDGILTTAASKMLYNYEPIFDATAVANAKTKGMIVVGKTNMDEFAMGGSGETSHYGATKNAWDHSKVPGGSSSGSAAAVASGQVRLSLGSDTGGSIRQPAAFNGIVGLKPTYGTVSRFGLIAFGSSLDQIGPFAPTVKENALLLNAIASEDTKDSTSAPVRIADFTSKIGQDIKGMKIALPKEYLGEGIDPEVKETILNAAKHFEKLGAIVEEVSLPHSKYGVAVYYIIASSEASSNLQRFDGIRYGYRAEDATNLDEIYVNSRSQGFGEEVKRRIMLGTFSLSSGYYDAYYKKAGQVRTLIIQDFEKVFADYDLILGPTAPSVAYDLDSLNHDPVAMYLADLLTIPVNLAGLPGISIPAGFSQGLPVGLQLIGPKYSEETIYQAAAAFEATTDYHKQQPVIFGGDN</sequence>
<dbReference type="EC" id="6.3.5.7" evidence="1"/>
<dbReference type="EMBL" id="CP000918">
    <property type="protein sequence ID" value="ACO17883.1"/>
    <property type="molecule type" value="Genomic_DNA"/>
</dbReference>
<dbReference type="RefSeq" id="WP_000143751.1">
    <property type="nucleotide sequence ID" value="NC_012468.1"/>
</dbReference>
<dbReference type="SMR" id="C1C5H2"/>
<dbReference type="KEGG" id="snm:SP70585_0506"/>
<dbReference type="HOGENOM" id="CLU_009600_0_3_9"/>
<dbReference type="Proteomes" id="UP000002211">
    <property type="component" value="Chromosome"/>
</dbReference>
<dbReference type="GO" id="GO:0030956">
    <property type="term" value="C:glutamyl-tRNA(Gln) amidotransferase complex"/>
    <property type="evidence" value="ECO:0007669"/>
    <property type="project" value="InterPro"/>
</dbReference>
<dbReference type="GO" id="GO:0005524">
    <property type="term" value="F:ATP binding"/>
    <property type="evidence" value="ECO:0007669"/>
    <property type="project" value="UniProtKB-KW"/>
</dbReference>
<dbReference type="GO" id="GO:0050567">
    <property type="term" value="F:glutaminyl-tRNA synthase (glutamine-hydrolyzing) activity"/>
    <property type="evidence" value="ECO:0007669"/>
    <property type="project" value="UniProtKB-UniRule"/>
</dbReference>
<dbReference type="GO" id="GO:0006412">
    <property type="term" value="P:translation"/>
    <property type="evidence" value="ECO:0007669"/>
    <property type="project" value="UniProtKB-UniRule"/>
</dbReference>
<dbReference type="Gene3D" id="3.90.1300.10">
    <property type="entry name" value="Amidase signature (AS) domain"/>
    <property type="match status" value="1"/>
</dbReference>
<dbReference type="HAMAP" id="MF_00120">
    <property type="entry name" value="GatA"/>
    <property type="match status" value="1"/>
</dbReference>
<dbReference type="InterPro" id="IPR000120">
    <property type="entry name" value="Amidase"/>
</dbReference>
<dbReference type="InterPro" id="IPR020556">
    <property type="entry name" value="Amidase_CS"/>
</dbReference>
<dbReference type="InterPro" id="IPR023631">
    <property type="entry name" value="Amidase_dom"/>
</dbReference>
<dbReference type="InterPro" id="IPR036928">
    <property type="entry name" value="AS_sf"/>
</dbReference>
<dbReference type="InterPro" id="IPR004412">
    <property type="entry name" value="GatA"/>
</dbReference>
<dbReference type="NCBIfam" id="TIGR00132">
    <property type="entry name" value="gatA"/>
    <property type="match status" value="1"/>
</dbReference>
<dbReference type="PANTHER" id="PTHR11895:SF151">
    <property type="entry name" value="GLUTAMYL-TRNA(GLN) AMIDOTRANSFERASE SUBUNIT A"/>
    <property type="match status" value="1"/>
</dbReference>
<dbReference type="PANTHER" id="PTHR11895">
    <property type="entry name" value="TRANSAMIDASE"/>
    <property type="match status" value="1"/>
</dbReference>
<dbReference type="Pfam" id="PF01425">
    <property type="entry name" value="Amidase"/>
    <property type="match status" value="1"/>
</dbReference>
<dbReference type="SUPFAM" id="SSF75304">
    <property type="entry name" value="Amidase signature (AS) enzymes"/>
    <property type="match status" value="1"/>
</dbReference>
<dbReference type="PROSITE" id="PS00571">
    <property type="entry name" value="AMIDASES"/>
    <property type="match status" value="1"/>
</dbReference>
<reference key="1">
    <citation type="journal article" date="2010" name="Genome Biol.">
        <title>Structure and dynamics of the pan-genome of Streptococcus pneumoniae and closely related species.</title>
        <authorList>
            <person name="Donati C."/>
            <person name="Hiller N.L."/>
            <person name="Tettelin H."/>
            <person name="Muzzi A."/>
            <person name="Croucher N.J."/>
            <person name="Angiuoli S.V."/>
            <person name="Oggioni M."/>
            <person name="Dunning Hotopp J.C."/>
            <person name="Hu F.Z."/>
            <person name="Riley D.R."/>
            <person name="Covacci A."/>
            <person name="Mitchell T.J."/>
            <person name="Bentley S.D."/>
            <person name="Kilian M."/>
            <person name="Ehrlich G.D."/>
            <person name="Rappuoli R."/>
            <person name="Moxon E.R."/>
            <person name="Masignani V."/>
        </authorList>
    </citation>
    <scope>NUCLEOTIDE SEQUENCE [LARGE SCALE GENOMIC DNA]</scope>
    <source>
        <strain>70585</strain>
    </source>
</reference>
<keyword id="KW-0067">ATP-binding</keyword>
<keyword id="KW-0436">Ligase</keyword>
<keyword id="KW-0547">Nucleotide-binding</keyword>
<keyword id="KW-0648">Protein biosynthesis</keyword>
<name>GATA_STRP7</name>
<organism>
    <name type="scientific">Streptococcus pneumoniae (strain 70585)</name>
    <dbReference type="NCBI Taxonomy" id="488221"/>
    <lineage>
        <taxon>Bacteria</taxon>
        <taxon>Bacillati</taxon>
        <taxon>Bacillota</taxon>
        <taxon>Bacilli</taxon>
        <taxon>Lactobacillales</taxon>
        <taxon>Streptococcaceae</taxon>
        <taxon>Streptococcus</taxon>
    </lineage>
</organism>
<gene>
    <name evidence="1" type="primary">gatA</name>
    <name type="ordered locus">SP70585_0506</name>
</gene>
<protein>
    <recommendedName>
        <fullName evidence="1">Glutamyl-tRNA(Gln) amidotransferase subunit A</fullName>
        <shortName evidence="1">Glu-ADT subunit A</shortName>
        <ecNumber evidence="1">6.3.5.7</ecNumber>
    </recommendedName>
</protein>
<comment type="function">
    <text evidence="1">Allows the formation of correctly charged Gln-tRNA(Gln) through the transamidation of misacylated Glu-tRNA(Gln) in organisms which lack glutaminyl-tRNA synthetase. The reaction takes place in the presence of glutamine and ATP through an activated gamma-phospho-Glu-tRNA(Gln).</text>
</comment>
<comment type="catalytic activity">
    <reaction evidence="1">
        <text>L-glutamyl-tRNA(Gln) + L-glutamine + ATP + H2O = L-glutaminyl-tRNA(Gln) + L-glutamate + ADP + phosphate + H(+)</text>
        <dbReference type="Rhea" id="RHEA:17521"/>
        <dbReference type="Rhea" id="RHEA-COMP:9681"/>
        <dbReference type="Rhea" id="RHEA-COMP:9684"/>
        <dbReference type="ChEBI" id="CHEBI:15377"/>
        <dbReference type="ChEBI" id="CHEBI:15378"/>
        <dbReference type="ChEBI" id="CHEBI:29985"/>
        <dbReference type="ChEBI" id="CHEBI:30616"/>
        <dbReference type="ChEBI" id="CHEBI:43474"/>
        <dbReference type="ChEBI" id="CHEBI:58359"/>
        <dbReference type="ChEBI" id="CHEBI:78520"/>
        <dbReference type="ChEBI" id="CHEBI:78521"/>
        <dbReference type="ChEBI" id="CHEBI:456216"/>
        <dbReference type="EC" id="6.3.5.7"/>
    </reaction>
</comment>
<comment type="subunit">
    <text evidence="1">Heterotrimer of A, B and C subunits.</text>
</comment>
<comment type="similarity">
    <text evidence="1">Belongs to the amidase family. GatA subfamily.</text>
</comment>
<feature type="chain" id="PRO_1000122491" description="Glutamyl-tRNA(Gln) amidotransferase subunit A">
    <location>
        <begin position="1"/>
        <end position="488"/>
    </location>
</feature>
<feature type="active site" description="Charge relay system" evidence="1">
    <location>
        <position position="77"/>
    </location>
</feature>
<feature type="active site" description="Charge relay system" evidence="1">
    <location>
        <position position="152"/>
    </location>
</feature>
<feature type="active site" description="Acyl-ester intermediate" evidence="1">
    <location>
        <position position="176"/>
    </location>
</feature>